<feature type="chain" id="PRO_0000284535" description="Sorting nexin-30">
    <location>
        <begin position="1"/>
        <end position="430"/>
    </location>
</feature>
<feature type="domain" description="PX" evidence="6">
    <location>
        <begin position="80"/>
        <end position="201"/>
    </location>
</feature>
<feature type="domain" description="BAR" evidence="7">
    <location>
        <begin position="223"/>
        <end position="428"/>
    </location>
</feature>
<feature type="region of interest" description="Disordered" evidence="8">
    <location>
        <begin position="1"/>
        <end position="66"/>
    </location>
</feature>
<feature type="compositionally biased region" description="Polar residues" evidence="8">
    <location>
        <begin position="1"/>
        <end position="18"/>
    </location>
</feature>
<feature type="compositionally biased region" description="Low complexity" evidence="8">
    <location>
        <begin position="57"/>
        <end position="66"/>
    </location>
</feature>
<feature type="binding site" evidence="2">
    <location>
        <position position="123"/>
    </location>
    <ligand>
        <name>a 1,2-diacyl-sn-glycero-3-phospho-(1D-myo-inositol-3-phosphate)</name>
        <dbReference type="ChEBI" id="CHEBI:58088"/>
    </ligand>
</feature>
<feature type="binding site" evidence="2">
    <location>
        <position position="125"/>
    </location>
    <ligand>
        <name>a 1,2-diacyl-sn-glycero-3-phospho-(1D-myo-inositol-3-phosphate)</name>
        <dbReference type="ChEBI" id="CHEBI:58088"/>
    </ligand>
</feature>
<feature type="binding site" evidence="5">
    <location>
        <position position="153"/>
    </location>
    <ligand>
        <name>a 1,2-diacyl-sn-glycero-3-phospho-(1D-myo-inositol-3-phosphate)</name>
        <dbReference type="ChEBI" id="CHEBI:58088"/>
    </ligand>
</feature>
<feature type="binding site" evidence="4">
    <location>
        <position position="167"/>
    </location>
    <ligand>
        <name>a 1,2-diacyl-sn-glycero-3-phospho-(1D-myo-inositol-3-phosphate)</name>
        <dbReference type="ChEBI" id="CHEBI:58088"/>
    </ligand>
</feature>
<reference key="1">
    <citation type="submission" date="2005-04" db="EMBL/GenBank/DDBJ databases">
        <authorList>
            <consortium name="NIH - Zebrafish Gene Collection (ZGC) project"/>
        </authorList>
    </citation>
    <scope>NUCLEOTIDE SEQUENCE [LARGE SCALE MRNA]</scope>
    <source>
        <tissue>Olfactory epithelium</tissue>
    </source>
</reference>
<protein>
    <recommendedName>
        <fullName>Sorting nexin-30</fullName>
    </recommendedName>
</protein>
<proteinExistence type="evidence at transcript level"/>
<accession>Q566W7</accession>
<dbReference type="EMBL" id="BC093298">
    <property type="protein sequence ID" value="AAH93298.1"/>
    <property type="molecule type" value="mRNA"/>
</dbReference>
<dbReference type="RefSeq" id="NP_001017798.1">
    <property type="nucleotide sequence ID" value="NM_001017798.1"/>
</dbReference>
<dbReference type="SMR" id="Q566W7"/>
<dbReference type="FunCoup" id="Q566W7">
    <property type="interactions" value="439"/>
</dbReference>
<dbReference type="STRING" id="7955.ENSDARP00000050176"/>
<dbReference type="PaxDb" id="7955-ENSDARP00000050176"/>
<dbReference type="GeneID" id="550496"/>
<dbReference type="KEGG" id="dre:550496"/>
<dbReference type="AGR" id="ZFIN:ZDB-GENE-050417-330"/>
<dbReference type="CTD" id="401548"/>
<dbReference type="ZFIN" id="ZDB-GENE-050417-330">
    <property type="gene designation" value="snx30"/>
</dbReference>
<dbReference type="eggNOG" id="KOG2273">
    <property type="taxonomic scope" value="Eukaryota"/>
</dbReference>
<dbReference type="InParanoid" id="Q566W7"/>
<dbReference type="OrthoDB" id="205639at2759"/>
<dbReference type="PhylomeDB" id="Q566W7"/>
<dbReference type="PRO" id="PR:Q566W7"/>
<dbReference type="Proteomes" id="UP000000437">
    <property type="component" value="Alternate scaffold 10"/>
</dbReference>
<dbReference type="Proteomes" id="UP000000437">
    <property type="component" value="Chromosome 10"/>
</dbReference>
<dbReference type="GO" id="GO:0005769">
    <property type="term" value="C:early endosome"/>
    <property type="evidence" value="ECO:0000250"/>
    <property type="project" value="UniProtKB"/>
</dbReference>
<dbReference type="GO" id="GO:0031901">
    <property type="term" value="C:early endosome membrane"/>
    <property type="evidence" value="ECO:0007669"/>
    <property type="project" value="UniProtKB-SubCell"/>
</dbReference>
<dbReference type="GO" id="GO:0000407">
    <property type="term" value="C:phagophore assembly site"/>
    <property type="evidence" value="ECO:0000318"/>
    <property type="project" value="GO_Central"/>
</dbReference>
<dbReference type="GO" id="GO:0035091">
    <property type="term" value="F:phosphatidylinositol binding"/>
    <property type="evidence" value="ECO:0007669"/>
    <property type="project" value="InterPro"/>
</dbReference>
<dbReference type="GO" id="GO:0032456">
    <property type="term" value="P:endocytic recycling"/>
    <property type="evidence" value="ECO:0000318"/>
    <property type="project" value="GO_Central"/>
</dbReference>
<dbReference type="GO" id="GO:0000423">
    <property type="term" value="P:mitophagy"/>
    <property type="evidence" value="ECO:0000318"/>
    <property type="project" value="GO_Central"/>
</dbReference>
<dbReference type="GO" id="GO:0034727">
    <property type="term" value="P:piecemeal microautophagy of the nucleus"/>
    <property type="evidence" value="ECO:0000318"/>
    <property type="project" value="GO_Central"/>
</dbReference>
<dbReference type="GO" id="GO:2000786">
    <property type="term" value="P:positive regulation of autophagosome assembly"/>
    <property type="evidence" value="ECO:0000250"/>
    <property type="project" value="UniProtKB"/>
</dbReference>
<dbReference type="GO" id="GO:0015031">
    <property type="term" value="P:protein transport"/>
    <property type="evidence" value="ECO:0000250"/>
    <property type="project" value="UniProtKB"/>
</dbReference>
<dbReference type="GO" id="GO:0061709">
    <property type="term" value="P:reticulophagy"/>
    <property type="evidence" value="ECO:0000318"/>
    <property type="project" value="GO_Central"/>
</dbReference>
<dbReference type="CDD" id="cd07667">
    <property type="entry name" value="BAR_SNX30"/>
    <property type="match status" value="1"/>
</dbReference>
<dbReference type="CDD" id="cd07283">
    <property type="entry name" value="PX_SNX30"/>
    <property type="match status" value="1"/>
</dbReference>
<dbReference type="Gene3D" id="1.20.1270.60">
    <property type="entry name" value="Arfaptin homology (AH) domain/BAR domain"/>
    <property type="match status" value="1"/>
</dbReference>
<dbReference type="Gene3D" id="3.30.1520.10">
    <property type="entry name" value="Phox-like domain"/>
    <property type="match status" value="1"/>
</dbReference>
<dbReference type="InterPro" id="IPR027267">
    <property type="entry name" value="AH/BAR_dom_sf"/>
</dbReference>
<dbReference type="InterPro" id="IPR001683">
    <property type="entry name" value="PX_dom"/>
</dbReference>
<dbReference type="InterPro" id="IPR036871">
    <property type="entry name" value="PX_dom_sf"/>
</dbReference>
<dbReference type="InterPro" id="IPR028649">
    <property type="entry name" value="SNX30_BAR"/>
</dbReference>
<dbReference type="PANTHER" id="PTHR45949:SF1">
    <property type="entry name" value="SORTING NEXIN-30"/>
    <property type="match status" value="1"/>
</dbReference>
<dbReference type="PANTHER" id="PTHR45949">
    <property type="entry name" value="SORTING NEXIN-4"/>
    <property type="match status" value="1"/>
</dbReference>
<dbReference type="Pfam" id="PF00787">
    <property type="entry name" value="PX"/>
    <property type="match status" value="1"/>
</dbReference>
<dbReference type="SMART" id="SM00312">
    <property type="entry name" value="PX"/>
    <property type="match status" value="1"/>
</dbReference>
<dbReference type="SUPFAM" id="SSF103657">
    <property type="entry name" value="BAR/IMD domain-like"/>
    <property type="match status" value="1"/>
</dbReference>
<dbReference type="SUPFAM" id="SSF64268">
    <property type="entry name" value="PX domain"/>
    <property type="match status" value="1"/>
</dbReference>
<dbReference type="PROSITE" id="PS50195">
    <property type="entry name" value="PX"/>
    <property type="match status" value="1"/>
</dbReference>
<sequence length="430" mass="49470">MSNGGTPRSLPSSGQKSIQEICHPLSAEESARSRSPDVLNPGEKDLSLPNGTPVDTSSPASSSSLLNRLQLDDDLDAETRDLFVTVDDPKKHVSTMETYITYRVCTKTTRTEFDLPEYSVRRRYQDFDWLRIKLEDSQPTHLIPPLPEKFVMKGVVDRFSEEFVETRRKALDKFLKRVADHPVLSFNEHFNAFLSAKDLNKRQGLALLTKMGESVKYVTGGYKLRGRPVEFAAMGEYLDMFTQKLGTIDRIAQRIIKEQTEFLMELREYGPVYSSWSSFEEDLHEPLEGVSGCVSNCSSALEELTEDMSEDFLPVLREYVLYIESMKNVLKKRDQVQAEYETKLEAVVFREDKKTPMPTDVEKCQDRVECFNADLKADWDRWQNNKRQDFRQLLTGMADKNIQYYEKCLAAWESLIPLLQDKQDAKGETN</sequence>
<name>SNX30_DANRE</name>
<organism>
    <name type="scientific">Danio rerio</name>
    <name type="common">Zebrafish</name>
    <name type="synonym">Brachydanio rerio</name>
    <dbReference type="NCBI Taxonomy" id="7955"/>
    <lineage>
        <taxon>Eukaryota</taxon>
        <taxon>Metazoa</taxon>
        <taxon>Chordata</taxon>
        <taxon>Craniata</taxon>
        <taxon>Vertebrata</taxon>
        <taxon>Euteleostomi</taxon>
        <taxon>Actinopterygii</taxon>
        <taxon>Neopterygii</taxon>
        <taxon>Teleostei</taxon>
        <taxon>Ostariophysi</taxon>
        <taxon>Cypriniformes</taxon>
        <taxon>Danionidae</taxon>
        <taxon>Danioninae</taxon>
        <taxon>Danio</taxon>
    </lineage>
</organism>
<gene>
    <name type="primary">snx30</name>
    <name type="ORF">zgc:112424</name>
</gene>
<keyword id="KW-0967">Endosome</keyword>
<keyword id="KW-0472">Membrane</keyword>
<keyword id="KW-0653">Protein transport</keyword>
<keyword id="KW-1185">Reference proteome</keyword>
<keyword id="KW-0813">Transport</keyword>
<evidence type="ECO:0000250" key="1">
    <source>
        <dbReference type="UniProtKB" id="O95219"/>
    </source>
</evidence>
<evidence type="ECO:0000250" key="2">
    <source>
        <dbReference type="UniProtKB" id="Q3UR97"/>
    </source>
</evidence>
<evidence type="ECO:0000250" key="3">
    <source>
        <dbReference type="UniProtKB" id="Q5VWJ9"/>
    </source>
</evidence>
<evidence type="ECO:0000250" key="4">
    <source>
        <dbReference type="UniProtKB" id="Q6P4T1"/>
    </source>
</evidence>
<evidence type="ECO:0000250" key="5">
    <source>
        <dbReference type="UniProtKB" id="Q96L94"/>
    </source>
</evidence>
<evidence type="ECO:0000255" key="6">
    <source>
        <dbReference type="PROSITE-ProRule" id="PRU00147"/>
    </source>
</evidence>
<evidence type="ECO:0000255" key="7">
    <source>
        <dbReference type="PROSITE-ProRule" id="PRU00361"/>
    </source>
</evidence>
<evidence type="ECO:0000256" key="8">
    <source>
        <dbReference type="SAM" id="MobiDB-lite"/>
    </source>
</evidence>
<evidence type="ECO:0000305" key="9"/>
<comment type="function">
    <text evidence="3">Involved in the regulation of endocytosis and in several stages of intracellular trafficking. Together with snx4, involved in autophagosome assembly.</text>
</comment>
<comment type="subcellular location">
    <subcellularLocation>
        <location evidence="3">Early endosome membrane</location>
        <topology evidence="1">Peripheral membrane protein</topology>
        <orientation evidence="1">Cytoplasmic side</orientation>
    </subcellularLocation>
</comment>
<comment type="similarity">
    <text evidence="9">Belongs to the sorting nexin family.</text>
</comment>